<accession>Q6UIM1</accession>
<feature type="chain" id="PRO_0000173551" description="Zinc finger HIT domain-containing protein 3">
    <location>
        <begin position="1" status="less than"/>
        <end position="147"/>
    </location>
</feature>
<feature type="zinc finger region" description="HIT-type" evidence="2">
    <location>
        <begin position="3"/>
        <end position="34"/>
    </location>
</feature>
<feature type="region of interest" description="Disordered" evidence="3">
    <location>
        <begin position="45"/>
        <end position="67"/>
    </location>
</feature>
<feature type="binding site" evidence="2">
    <location>
        <position position="3"/>
    </location>
    <ligand>
        <name>Zn(2+)</name>
        <dbReference type="ChEBI" id="CHEBI:29105"/>
        <label>1</label>
    </ligand>
</feature>
<feature type="binding site" evidence="2">
    <location>
        <position position="6"/>
    </location>
    <ligand>
        <name>Zn(2+)</name>
        <dbReference type="ChEBI" id="CHEBI:29105"/>
        <label>1</label>
    </ligand>
</feature>
<feature type="binding site" evidence="2">
    <location>
        <position position="14"/>
    </location>
    <ligand>
        <name>Zn(2+)</name>
        <dbReference type="ChEBI" id="CHEBI:29105"/>
        <label>2</label>
    </ligand>
</feature>
<feature type="binding site" evidence="2">
    <location>
        <position position="17"/>
    </location>
    <ligand>
        <name>Zn(2+)</name>
        <dbReference type="ChEBI" id="CHEBI:29105"/>
        <label>2</label>
    </ligand>
</feature>
<feature type="binding site" evidence="2">
    <location>
        <position position="22"/>
    </location>
    <ligand>
        <name>Zn(2+)</name>
        <dbReference type="ChEBI" id="CHEBI:29105"/>
        <label>1</label>
    </ligand>
</feature>
<feature type="binding site" evidence="2">
    <location>
        <position position="26"/>
    </location>
    <ligand>
        <name>Zn(2+)</name>
        <dbReference type="ChEBI" id="CHEBI:29105"/>
        <label>1</label>
    </ligand>
</feature>
<feature type="binding site" evidence="2">
    <location>
        <position position="30"/>
    </location>
    <ligand>
        <name>Zn(2+)</name>
        <dbReference type="ChEBI" id="CHEBI:29105"/>
        <label>2</label>
    </ligand>
</feature>
<feature type="binding site" evidence="2">
    <location>
        <position position="34"/>
    </location>
    <ligand>
        <name>Zn(2+)</name>
        <dbReference type="ChEBI" id="CHEBI:29105"/>
        <label>2</label>
    </ligand>
</feature>
<feature type="modified residue" description="Phosphoserine" evidence="1">
    <location>
        <position position="72"/>
    </location>
</feature>
<feature type="non-terminal residue">
    <location>
        <position position="1"/>
    </location>
</feature>
<sequence length="147" mass="16724">VVCVICLEKPKYRCPACRVPYCSVACFRKHKEQCNPEARPVEKKIRSALPTKTXKPVENKDDDDSIADFLNSDEEEDRVSLQNLKNLGKSATLRSLLLNPHLRQLMVNLDQGEDKAKLMRAYMQEPLFVEFADCCLGIVEPSQNEDS</sequence>
<organism>
    <name type="scientific">Macaca mulatta</name>
    <name type="common">Rhesus macaque</name>
    <dbReference type="NCBI Taxonomy" id="9544"/>
    <lineage>
        <taxon>Eukaryota</taxon>
        <taxon>Metazoa</taxon>
        <taxon>Chordata</taxon>
        <taxon>Craniata</taxon>
        <taxon>Vertebrata</taxon>
        <taxon>Euteleostomi</taxon>
        <taxon>Mammalia</taxon>
        <taxon>Eutheria</taxon>
        <taxon>Euarchontoglires</taxon>
        <taxon>Primates</taxon>
        <taxon>Haplorrhini</taxon>
        <taxon>Catarrhini</taxon>
        <taxon>Cercopithecidae</taxon>
        <taxon>Cercopithecinae</taxon>
        <taxon>Macaca</taxon>
    </lineage>
</organism>
<comment type="subunit">
    <text evidence="1">Thyroid receptor interacting proteins (TRIPs) specifically interact with the ligand binding domain of the thyroid receptor (TR) (By similarity). Requires the presence of thyroid hormone for its interaction (By similarity). Interacts with NUFIP1 (By similarity). Interacts (via HIT-type zinc finger) with the RUVBL1/RUVBL2 complex in the presence of ADP (By similarity).</text>
</comment>
<comment type="subcellular location">
    <subcellularLocation>
        <location evidence="1">Cytoplasm</location>
    </subcellularLocation>
    <subcellularLocation>
        <location evidence="1">Nucleus</location>
    </subcellularLocation>
</comment>
<protein>
    <recommendedName>
        <fullName>Zinc finger HIT domain-containing protein 3</fullName>
    </recommendedName>
    <alternativeName>
        <fullName>Thyroid hormone receptor interactor 3</fullName>
    </alternativeName>
    <alternativeName>
        <fullName>Thyroid receptor-interacting protein 3</fullName>
        <shortName>TR-interacting protein 3</shortName>
        <shortName>TRIP-3</shortName>
    </alternativeName>
</protein>
<dbReference type="EMBL" id="AY369849">
    <property type="protein sequence ID" value="AAR11274.1"/>
    <property type="molecule type" value="mRNA"/>
</dbReference>
<dbReference type="STRING" id="9544.ENSMMUP00000010396"/>
<dbReference type="PaxDb" id="9544-ENSMMUP00000010396"/>
<dbReference type="eggNOG" id="KOG2857">
    <property type="taxonomic scope" value="Eukaryota"/>
</dbReference>
<dbReference type="InParanoid" id="Q6UIM1"/>
<dbReference type="Proteomes" id="UP000006718">
    <property type="component" value="Unassembled WGS sequence"/>
</dbReference>
<dbReference type="GO" id="GO:0005737">
    <property type="term" value="C:cytoplasm"/>
    <property type="evidence" value="ECO:0000250"/>
    <property type="project" value="UniProtKB"/>
</dbReference>
<dbReference type="GO" id="GO:0005634">
    <property type="term" value="C:nucleus"/>
    <property type="evidence" value="ECO:0000250"/>
    <property type="project" value="UniProtKB"/>
</dbReference>
<dbReference type="GO" id="GO:0070761">
    <property type="term" value="C:pre-snoRNP complex"/>
    <property type="evidence" value="ECO:0000318"/>
    <property type="project" value="GO_Central"/>
</dbReference>
<dbReference type="GO" id="GO:0008270">
    <property type="term" value="F:zinc ion binding"/>
    <property type="evidence" value="ECO:0007669"/>
    <property type="project" value="UniProtKB-KW"/>
</dbReference>
<dbReference type="GO" id="GO:0000492">
    <property type="term" value="P:box C/D snoRNP assembly"/>
    <property type="evidence" value="ECO:0000318"/>
    <property type="project" value="GO_Central"/>
</dbReference>
<dbReference type="GO" id="GO:0000463">
    <property type="term" value="P:maturation of LSU-rRNA from tricistronic rRNA transcript (SSU-rRNA, 5.8S rRNA, LSU-rRNA)"/>
    <property type="evidence" value="ECO:0000318"/>
    <property type="project" value="GO_Central"/>
</dbReference>
<dbReference type="GO" id="GO:0048254">
    <property type="term" value="P:snoRNA localization"/>
    <property type="evidence" value="ECO:0000318"/>
    <property type="project" value="GO_Central"/>
</dbReference>
<dbReference type="CDD" id="cd23024">
    <property type="entry name" value="zf-HIT_ZNHIT2-3"/>
    <property type="match status" value="1"/>
</dbReference>
<dbReference type="FunFam" id="3.30.60.190:FF:000002">
    <property type="entry name" value="Zinc finger HIT domain-containing protein 3"/>
    <property type="match status" value="1"/>
</dbReference>
<dbReference type="Gene3D" id="3.30.60.190">
    <property type="match status" value="1"/>
</dbReference>
<dbReference type="InterPro" id="IPR051639">
    <property type="entry name" value="BCD1"/>
</dbReference>
<dbReference type="InterPro" id="IPR007529">
    <property type="entry name" value="Znf_HIT"/>
</dbReference>
<dbReference type="InterPro" id="IPR048371">
    <property type="entry name" value="ZNHIT3_C"/>
</dbReference>
<dbReference type="PANTHER" id="PTHR13483">
    <property type="entry name" value="BOX C_D SNORNA PROTEIN 1-RELATED"/>
    <property type="match status" value="1"/>
</dbReference>
<dbReference type="PANTHER" id="PTHR13483:SF11">
    <property type="entry name" value="ZINC FINGER HIT DOMAIN-CONTAINING PROTEIN 3"/>
    <property type="match status" value="1"/>
</dbReference>
<dbReference type="Pfam" id="PF04438">
    <property type="entry name" value="zf-HIT"/>
    <property type="match status" value="1"/>
</dbReference>
<dbReference type="Pfam" id="PF21373">
    <property type="entry name" value="ZNHIT3_C"/>
    <property type="match status" value="1"/>
</dbReference>
<dbReference type="SUPFAM" id="SSF144232">
    <property type="entry name" value="HIT/MYND zinc finger-like"/>
    <property type="match status" value="1"/>
</dbReference>
<dbReference type="PROSITE" id="PS51083">
    <property type="entry name" value="ZF_HIT"/>
    <property type="match status" value="1"/>
</dbReference>
<gene>
    <name type="primary">ZNHIT3</name>
    <name type="synonym">TRIP3</name>
</gene>
<evidence type="ECO:0000250" key="1">
    <source>
        <dbReference type="UniProtKB" id="Q15649"/>
    </source>
</evidence>
<evidence type="ECO:0000255" key="2">
    <source>
        <dbReference type="PROSITE-ProRule" id="PRU00453"/>
    </source>
</evidence>
<evidence type="ECO:0000256" key="3">
    <source>
        <dbReference type="SAM" id="MobiDB-lite"/>
    </source>
</evidence>
<keyword id="KW-0963">Cytoplasm</keyword>
<keyword id="KW-0479">Metal-binding</keyword>
<keyword id="KW-0539">Nucleus</keyword>
<keyword id="KW-0597">Phosphoprotein</keyword>
<keyword id="KW-1185">Reference proteome</keyword>
<keyword id="KW-0862">Zinc</keyword>
<keyword id="KW-0863">Zinc-finger</keyword>
<proteinExistence type="evidence at transcript level"/>
<name>ZNHI3_MACMU</name>
<reference key="1">
    <citation type="journal article" date="2003" name="Proc. Natl. Acad. Sci. U.S.A.">
        <title>Elevated gene expression levels distinguish human from non-human primate brains.</title>
        <authorList>
            <person name="Caceres M."/>
            <person name="Lachuer J."/>
            <person name="Zapala M.A."/>
            <person name="Redmond J.C."/>
            <person name="Kudo L."/>
            <person name="Geschwind D.H."/>
            <person name="Lockhart D.J."/>
            <person name="Preuss T.M."/>
            <person name="Barlow C."/>
        </authorList>
    </citation>
    <scope>NUCLEOTIDE SEQUENCE [MRNA]</scope>
</reference>